<reference key="1">
    <citation type="journal article" date="2002" name="Proc. Natl. Acad. Sci. U.S.A.">
        <title>The genome sequence of the facultative intracellular pathogen Brucella melitensis.</title>
        <authorList>
            <person name="DelVecchio V.G."/>
            <person name="Kapatral V."/>
            <person name="Redkar R.J."/>
            <person name="Patra G."/>
            <person name="Mujer C."/>
            <person name="Los T."/>
            <person name="Ivanova N."/>
            <person name="Anderson I."/>
            <person name="Bhattacharyya A."/>
            <person name="Lykidis A."/>
            <person name="Reznik G."/>
            <person name="Jablonski L."/>
            <person name="Larsen N."/>
            <person name="D'Souza M."/>
            <person name="Bernal A."/>
            <person name="Mazur M."/>
            <person name="Goltsman E."/>
            <person name="Selkov E."/>
            <person name="Elzer P.H."/>
            <person name="Hagius S."/>
            <person name="O'Callaghan D."/>
            <person name="Letesson J.-J."/>
            <person name="Haselkorn R."/>
            <person name="Kyrpides N.C."/>
            <person name="Overbeek R."/>
        </authorList>
    </citation>
    <scope>NUCLEOTIDE SEQUENCE [LARGE SCALE GENOMIC DNA]</scope>
    <source>
        <strain>ATCC 23456 / CCUG 17765 / NCTC 10094 / 16M</strain>
    </source>
</reference>
<dbReference type="EC" id="3.6.5.3" evidence="2"/>
<dbReference type="EMBL" id="AE008917">
    <property type="protein sequence ID" value="AAL51923.1"/>
    <property type="status" value="ALT_INIT"/>
    <property type="molecule type" value="Genomic_DNA"/>
</dbReference>
<dbReference type="EMBL" id="AE008917">
    <property type="protein sequence ID" value="AAL51936.1"/>
    <property type="molecule type" value="Genomic_DNA"/>
</dbReference>
<dbReference type="PIR" id="AE3346">
    <property type="entry name" value="AE3346"/>
</dbReference>
<dbReference type="PIR" id="AH3344">
    <property type="entry name" value="AH3344"/>
</dbReference>
<dbReference type="SMR" id="P64024"/>
<dbReference type="KEGG" id="bme:BMEI0742"/>
<dbReference type="KEGG" id="bme:BMEI0755"/>
<dbReference type="KEGG" id="bmel:DK63_681"/>
<dbReference type="PATRIC" id="fig|224914.52.peg.711"/>
<dbReference type="eggNOG" id="COG0050">
    <property type="taxonomic scope" value="Bacteria"/>
</dbReference>
<dbReference type="PhylomeDB" id="P64024"/>
<dbReference type="Proteomes" id="UP000000419">
    <property type="component" value="Chromosome I"/>
</dbReference>
<dbReference type="GO" id="GO:0005829">
    <property type="term" value="C:cytosol"/>
    <property type="evidence" value="ECO:0007669"/>
    <property type="project" value="TreeGrafter"/>
</dbReference>
<dbReference type="GO" id="GO:0005525">
    <property type="term" value="F:GTP binding"/>
    <property type="evidence" value="ECO:0007669"/>
    <property type="project" value="UniProtKB-UniRule"/>
</dbReference>
<dbReference type="GO" id="GO:0003924">
    <property type="term" value="F:GTPase activity"/>
    <property type="evidence" value="ECO:0007669"/>
    <property type="project" value="InterPro"/>
</dbReference>
<dbReference type="GO" id="GO:0097216">
    <property type="term" value="F:guanosine tetraphosphate binding"/>
    <property type="evidence" value="ECO:0007669"/>
    <property type="project" value="UniProtKB-ARBA"/>
</dbReference>
<dbReference type="GO" id="GO:0003746">
    <property type="term" value="F:translation elongation factor activity"/>
    <property type="evidence" value="ECO:0007669"/>
    <property type="project" value="UniProtKB-UniRule"/>
</dbReference>
<dbReference type="CDD" id="cd01884">
    <property type="entry name" value="EF_Tu"/>
    <property type="match status" value="1"/>
</dbReference>
<dbReference type="CDD" id="cd03697">
    <property type="entry name" value="EFTU_II"/>
    <property type="match status" value="1"/>
</dbReference>
<dbReference type="CDD" id="cd03707">
    <property type="entry name" value="EFTU_III"/>
    <property type="match status" value="1"/>
</dbReference>
<dbReference type="FunFam" id="2.40.30.10:FF:000001">
    <property type="entry name" value="Elongation factor Tu"/>
    <property type="match status" value="1"/>
</dbReference>
<dbReference type="FunFam" id="3.40.50.300:FF:000003">
    <property type="entry name" value="Elongation factor Tu"/>
    <property type="match status" value="1"/>
</dbReference>
<dbReference type="Gene3D" id="3.40.50.300">
    <property type="entry name" value="P-loop containing nucleotide triphosphate hydrolases"/>
    <property type="match status" value="1"/>
</dbReference>
<dbReference type="Gene3D" id="2.40.30.10">
    <property type="entry name" value="Translation factors"/>
    <property type="match status" value="2"/>
</dbReference>
<dbReference type="HAMAP" id="MF_00118_B">
    <property type="entry name" value="EF_Tu_B"/>
    <property type="match status" value="1"/>
</dbReference>
<dbReference type="InterPro" id="IPR041709">
    <property type="entry name" value="EF-Tu_GTP-bd"/>
</dbReference>
<dbReference type="InterPro" id="IPR050055">
    <property type="entry name" value="EF-Tu_GTPase"/>
</dbReference>
<dbReference type="InterPro" id="IPR004161">
    <property type="entry name" value="EFTu-like_2"/>
</dbReference>
<dbReference type="InterPro" id="IPR033720">
    <property type="entry name" value="EFTU_2"/>
</dbReference>
<dbReference type="InterPro" id="IPR031157">
    <property type="entry name" value="G_TR_CS"/>
</dbReference>
<dbReference type="InterPro" id="IPR027417">
    <property type="entry name" value="P-loop_NTPase"/>
</dbReference>
<dbReference type="InterPro" id="IPR005225">
    <property type="entry name" value="Small_GTP-bd"/>
</dbReference>
<dbReference type="InterPro" id="IPR000795">
    <property type="entry name" value="T_Tr_GTP-bd_dom"/>
</dbReference>
<dbReference type="InterPro" id="IPR009000">
    <property type="entry name" value="Transl_B-barrel_sf"/>
</dbReference>
<dbReference type="InterPro" id="IPR009001">
    <property type="entry name" value="Transl_elong_EF1A/Init_IF2_C"/>
</dbReference>
<dbReference type="InterPro" id="IPR004541">
    <property type="entry name" value="Transl_elong_EFTu/EF1A_bac/org"/>
</dbReference>
<dbReference type="InterPro" id="IPR004160">
    <property type="entry name" value="Transl_elong_EFTu/EF1A_C"/>
</dbReference>
<dbReference type="NCBIfam" id="TIGR00485">
    <property type="entry name" value="EF-Tu"/>
    <property type="match status" value="1"/>
</dbReference>
<dbReference type="NCBIfam" id="NF000766">
    <property type="entry name" value="PRK00049.1"/>
    <property type="match status" value="1"/>
</dbReference>
<dbReference type="NCBIfam" id="NF009372">
    <property type="entry name" value="PRK12735.1"/>
    <property type="match status" value="1"/>
</dbReference>
<dbReference type="NCBIfam" id="NF009373">
    <property type="entry name" value="PRK12736.1"/>
    <property type="match status" value="1"/>
</dbReference>
<dbReference type="NCBIfam" id="TIGR00231">
    <property type="entry name" value="small_GTP"/>
    <property type="match status" value="1"/>
</dbReference>
<dbReference type="PANTHER" id="PTHR43721:SF22">
    <property type="entry name" value="ELONGATION FACTOR TU, MITOCHONDRIAL"/>
    <property type="match status" value="1"/>
</dbReference>
<dbReference type="PANTHER" id="PTHR43721">
    <property type="entry name" value="ELONGATION FACTOR TU-RELATED"/>
    <property type="match status" value="1"/>
</dbReference>
<dbReference type="Pfam" id="PF00009">
    <property type="entry name" value="GTP_EFTU"/>
    <property type="match status" value="1"/>
</dbReference>
<dbReference type="Pfam" id="PF03144">
    <property type="entry name" value="GTP_EFTU_D2"/>
    <property type="match status" value="1"/>
</dbReference>
<dbReference type="Pfam" id="PF03143">
    <property type="entry name" value="GTP_EFTU_D3"/>
    <property type="match status" value="1"/>
</dbReference>
<dbReference type="PRINTS" id="PR00315">
    <property type="entry name" value="ELONGATNFCT"/>
</dbReference>
<dbReference type="SUPFAM" id="SSF50465">
    <property type="entry name" value="EF-Tu/eEF-1alpha/eIF2-gamma C-terminal domain"/>
    <property type="match status" value="1"/>
</dbReference>
<dbReference type="SUPFAM" id="SSF52540">
    <property type="entry name" value="P-loop containing nucleoside triphosphate hydrolases"/>
    <property type="match status" value="1"/>
</dbReference>
<dbReference type="SUPFAM" id="SSF50447">
    <property type="entry name" value="Translation proteins"/>
    <property type="match status" value="1"/>
</dbReference>
<dbReference type="PROSITE" id="PS00301">
    <property type="entry name" value="G_TR_1"/>
    <property type="match status" value="1"/>
</dbReference>
<dbReference type="PROSITE" id="PS51722">
    <property type="entry name" value="G_TR_2"/>
    <property type="match status" value="1"/>
</dbReference>
<organism>
    <name type="scientific">Brucella melitensis biotype 1 (strain ATCC 23456 / CCUG 17765 / NCTC 10094 / 16M)</name>
    <dbReference type="NCBI Taxonomy" id="224914"/>
    <lineage>
        <taxon>Bacteria</taxon>
        <taxon>Pseudomonadati</taxon>
        <taxon>Pseudomonadota</taxon>
        <taxon>Alphaproteobacteria</taxon>
        <taxon>Hyphomicrobiales</taxon>
        <taxon>Brucellaceae</taxon>
        <taxon>Brucella/Ochrobactrum group</taxon>
        <taxon>Brucella</taxon>
    </lineage>
</organism>
<proteinExistence type="inferred from homology"/>
<protein>
    <recommendedName>
        <fullName evidence="2">Elongation factor Tu</fullName>
        <shortName evidence="2">EF-Tu</shortName>
        <ecNumber evidence="2">3.6.5.3</ecNumber>
    </recommendedName>
</protein>
<comment type="function">
    <text evidence="2">GTP hydrolase that promotes the GTP-dependent binding of aminoacyl-tRNA to the A-site of ribosomes during protein biosynthesis.</text>
</comment>
<comment type="catalytic activity">
    <reaction evidence="2">
        <text>GTP + H2O = GDP + phosphate + H(+)</text>
        <dbReference type="Rhea" id="RHEA:19669"/>
        <dbReference type="ChEBI" id="CHEBI:15377"/>
        <dbReference type="ChEBI" id="CHEBI:15378"/>
        <dbReference type="ChEBI" id="CHEBI:37565"/>
        <dbReference type="ChEBI" id="CHEBI:43474"/>
        <dbReference type="ChEBI" id="CHEBI:58189"/>
        <dbReference type="EC" id="3.6.5.3"/>
    </reaction>
    <physiologicalReaction direction="left-to-right" evidence="2">
        <dbReference type="Rhea" id="RHEA:19670"/>
    </physiologicalReaction>
</comment>
<comment type="subunit">
    <text evidence="2">Monomer.</text>
</comment>
<comment type="subcellular location">
    <subcellularLocation>
        <location evidence="2">Cytoplasm</location>
    </subcellularLocation>
</comment>
<comment type="similarity">
    <text evidence="2">Belongs to the TRAFAC class translation factor GTPase superfamily. Classic translation factor GTPase family. EF-Tu/EF-1A subfamily.</text>
</comment>
<comment type="sequence caution" evidence="3">
    <conflict type="erroneous initiation">
        <sequence resource="EMBL-CDS" id="AAL51923"/>
    </conflict>
</comment>
<feature type="chain" id="PRO_0000091294" description="Elongation factor Tu">
    <location>
        <begin position="1"/>
        <end position="391"/>
    </location>
</feature>
<feature type="domain" description="tr-type G">
    <location>
        <begin position="10"/>
        <end position="201"/>
    </location>
</feature>
<feature type="region of interest" description="G1" evidence="1">
    <location>
        <begin position="19"/>
        <end position="26"/>
    </location>
</feature>
<feature type="region of interest" description="G2" evidence="1">
    <location>
        <begin position="55"/>
        <end position="59"/>
    </location>
</feature>
<feature type="region of interest" description="G3" evidence="1">
    <location>
        <begin position="76"/>
        <end position="79"/>
    </location>
</feature>
<feature type="region of interest" description="G4" evidence="1">
    <location>
        <begin position="131"/>
        <end position="134"/>
    </location>
</feature>
<feature type="region of interest" description="G5" evidence="1">
    <location>
        <begin position="169"/>
        <end position="171"/>
    </location>
</feature>
<feature type="binding site" evidence="2">
    <location>
        <begin position="19"/>
        <end position="26"/>
    </location>
    <ligand>
        <name>GTP</name>
        <dbReference type="ChEBI" id="CHEBI:37565"/>
    </ligand>
</feature>
<feature type="binding site" evidence="2">
    <location>
        <position position="26"/>
    </location>
    <ligand>
        <name>Mg(2+)</name>
        <dbReference type="ChEBI" id="CHEBI:18420"/>
    </ligand>
</feature>
<feature type="binding site" evidence="2">
    <location>
        <begin position="76"/>
        <end position="80"/>
    </location>
    <ligand>
        <name>GTP</name>
        <dbReference type="ChEBI" id="CHEBI:37565"/>
    </ligand>
</feature>
<feature type="binding site" evidence="2">
    <location>
        <begin position="131"/>
        <end position="134"/>
    </location>
    <ligand>
        <name>GTP</name>
        <dbReference type="ChEBI" id="CHEBI:37565"/>
    </ligand>
</feature>
<evidence type="ECO:0000250" key="1"/>
<evidence type="ECO:0000255" key="2">
    <source>
        <dbReference type="HAMAP-Rule" id="MF_00118"/>
    </source>
</evidence>
<evidence type="ECO:0000305" key="3"/>
<sequence length="391" mass="42605">MAKSKFERTKPHVNIGTIGHVDHGKTSLTAAITKFFGEFKAYDQIDAAPEERARGITISTAHVEYETANRHYAHVDCPGHADYVKNMITGAAQMDGAILVVSAADGPMPQTREHILLARQVGVPAIVVFLNKCDQVDDAELLELVELEVRELLSKYEFPGDEIPIIKGSALAALEDSSKELGEDAIRNLMDAVDSYIPTPERPIDQPFLMPIEDVFSISGRGTVVTGRVERGIVKVGEEVEIVGIKATTKTTVTGVEMFRKLLDQGQAGDNIGALIRGVGREDVERGQVLCKPGSVKPHTKFKAEAYILTKDEGGRHTPFFTNYRPQFYFRTTDVTGVVTLPAGTEMVMPGDNVAMDVTLIVPIAMEEKLRFAIREGGRTVGAGIVSSIIE</sequence>
<gene>
    <name evidence="2" type="primary">tufA</name>
    <name type="ordered locus">BMEI0742</name>
</gene>
<gene>
    <name evidence="2" type="primary">tufB</name>
    <name type="ordered locus">BMEI0755</name>
</gene>
<accession>P64024</accession>
<accession>Q8YHP2</accession>
<accession>Q8YHQ4</accession>
<keyword id="KW-0963">Cytoplasm</keyword>
<keyword id="KW-0251">Elongation factor</keyword>
<keyword id="KW-0342">GTP-binding</keyword>
<keyword id="KW-0378">Hydrolase</keyword>
<keyword id="KW-0460">Magnesium</keyword>
<keyword id="KW-0479">Metal-binding</keyword>
<keyword id="KW-0547">Nucleotide-binding</keyword>
<keyword id="KW-0648">Protein biosynthesis</keyword>
<name>EFTU_BRUME</name>